<proteinExistence type="inferred from homology"/>
<organism>
    <name type="scientific">Burkholderia pseudomallei (strain 1710b)</name>
    <dbReference type="NCBI Taxonomy" id="320372"/>
    <lineage>
        <taxon>Bacteria</taxon>
        <taxon>Pseudomonadati</taxon>
        <taxon>Pseudomonadota</taxon>
        <taxon>Betaproteobacteria</taxon>
        <taxon>Burkholderiales</taxon>
        <taxon>Burkholderiaceae</taxon>
        <taxon>Burkholderia</taxon>
        <taxon>pseudomallei group</taxon>
    </lineage>
</organism>
<gene>
    <name evidence="1" type="primary">rplP</name>
    <name type="ordered locus">BURPS1710b_3769</name>
</gene>
<sequence>MLQPKRRKYRKEQKGRNTGIATRGNAVSFGEFGLKAVGRGRLTARQIEAARRAMTRHIKRGGRIWIRIFPDKPISQKPAEVRMGNGKGNPEYYVAEIQPGKMLYEMDGVSEELAREAFRLAAAKLPLKTTFIVRQLGA</sequence>
<comment type="function">
    <text evidence="1">Binds 23S rRNA and is also seen to make contacts with the A and possibly P site tRNAs.</text>
</comment>
<comment type="subunit">
    <text evidence="1">Part of the 50S ribosomal subunit.</text>
</comment>
<comment type="similarity">
    <text evidence="1">Belongs to the universal ribosomal protein uL16 family.</text>
</comment>
<keyword id="KW-0687">Ribonucleoprotein</keyword>
<keyword id="KW-0689">Ribosomal protein</keyword>
<keyword id="KW-0694">RNA-binding</keyword>
<keyword id="KW-0699">rRNA-binding</keyword>
<keyword id="KW-0820">tRNA-binding</keyword>
<protein>
    <recommendedName>
        <fullName evidence="1">Large ribosomal subunit protein uL16</fullName>
    </recommendedName>
    <alternativeName>
        <fullName evidence="3">50S ribosomal protein L16</fullName>
    </alternativeName>
</protein>
<accession>Q3JMS0</accession>
<evidence type="ECO:0000255" key="1">
    <source>
        <dbReference type="HAMAP-Rule" id="MF_01342"/>
    </source>
</evidence>
<evidence type="ECO:0000256" key="2">
    <source>
        <dbReference type="SAM" id="MobiDB-lite"/>
    </source>
</evidence>
<evidence type="ECO:0000305" key="3"/>
<dbReference type="EMBL" id="CP000124">
    <property type="protein sequence ID" value="ABA50839.1"/>
    <property type="molecule type" value="Genomic_DNA"/>
</dbReference>
<dbReference type="RefSeq" id="WP_004199857.1">
    <property type="nucleotide sequence ID" value="NC_007434.1"/>
</dbReference>
<dbReference type="SMR" id="Q3JMS0"/>
<dbReference type="EnsemblBacteria" id="ABA50839">
    <property type="protein sequence ID" value="ABA50839"/>
    <property type="gene ID" value="BURPS1710b_3769"/>
</dbReference>
<dbReference type="GeneID" id="93061825"/>
<dbReference type="KEGG" id="bpm:BURPS1710b_3769"/>
<dbReference type="HOGENOM" id="CLU_078858_2_1_4"/>
<dbReference type="Proteomes" id="UP000002700">
    <property type="component" value="Chromosome I"/>
</dbReference>
<dbReference type="GO" id="GO:0022625">
    <property type="term" value="C:cytosolic large ribosomal subunit"/>
    <property type="evidence" value="ECO:0007669"/>
    <property type="project" value="TreeGrafter"/>
</dbReference>
<dbReference type="GO" id="GO:0019843">
    <property type="term" value="F:rRNA binding"/>
    <property type="evidence" value="ECO:0007669"/>
    <property type="project" value="UniProtKB-UniRule"/>
</dbReference>
<dbReference type="GO" id="GO:0003735">
    <property type="term" value="F:structural constituent of ribosome"/>
    <property type="evidence" value="ECO:0007669"/>
    <property type="project" value="InterPro"/>
</dbReference>
<dbReference type="GO" id="GO:0000049">
    <property type="term" value="F:tRNA binding"/>
    <property type="evidence" value="ECO:0007669"/>
    <property type="project" value="UniProtKB-KW"/>
</dbReference>
<dbReference type="GO" id="GO:0006412">
    <property type="term" value="P:translation"/>
    <property type="evidence" value="ECO:0007669"/>
    <property type="project" value="UniProtKB-UniRule"/>
</dbReference>
<dbReference type="CDD" id="cd01433">
    <property type="entry name" value="Ribosomal_L16_L10e"/>
    <property type="match status" value="1"/>
</dbReference>
<dbReference type="FunFam" id="3.90.1170.10:FF:000001">
    <property type="entry name" value="50S ribosomal protein L16"/>
    <property type="match status" value="1"/>
</dbReference>
<dbReference type="Gene3D" id="3.90.1170.10">
    <property type="entry name" value="Ribosomal protein L10e/L16"/>
    <property type="match status" value="1"/>
</dbReference>
<dbReference type="HAMAP" id="MF_01342">
    <property type="entry name" value="Ribosomal_uL16"/>
    <property type="match status" value="1"/>
</dbReference>
<dbReference type="InterPro" id="IPR047873">
    <property type="entry name" value="Ribosomal_uL16"/>
</dbReference>
<dbReference type="InterPro" id="IPR000114">
    <property type="entry name" value="Ribosomal_uL16_bact-type"/>
</dbReference>
<dbReference type="InterPro" id="IPR020798">
    <property type="entry name" value="Ribosomal_uL16_CS"/>
</dbReference>
<dbReference type="InterPro" id="IPR016180">
    <property type="entry name" value="Ribosomal_uL16_dom"/>
</dbReference>
<dbReference type="InterPro" id="IPR036920">
    <property type="entry name" value="Ribosomal_uL16_sf"/>
</dbReference>
<dbReference type="NCBIfam" id="TIGR01164">
    <property type="entry name" value="rplP_bact"/>
    <property type="match status" value="1"/>
</dbReference>
<dbReference type="PANTHER" id="PTHR12220">
    <property type="entry name" value="50S/60S RIBOSOMAL PROTEIN L16"/>
    <property type="match status" value="1"/>
</dbReference>
<dbReference type="PANTHER" id="PTHR12220:SF13">
    <property type="entry name" value="LARGE RIBOSOMAL SUBUNIT PROTEIN UL16M"/>
    <property type="match status" value="1"/>
</dbReference>
<dbReference type="Pfam" id="PF00252">
    <property type="entry name" value="Ribosomal_L16"/>
    <property type="match status" value="1"/>
</dbReference>
<dbReference type="PRINTS" id="PR00060">
    <property type="entry name" value="RIBOSOMALL16"/>
</dbReference>
<dbReference type="SUPFAM" id="SSF54686">
    <property type="entry name" value="Ribosomal protein L16p/L10e"/>
    <property type="match status" value="1"/>
</dbReference>
<dbReference type="PROSITE" id="PS00586">
    <property type="entry name" value="RIBOSOMAL_L16_1"/>
    <property type="match status" value="1"/>
</dbReference>
<feature type="chain" id="PRO_0000251621" description="Large ribosomal subunit protein uL16">
    <location>
        <begin position="1"/>
        <end position="138"/>
    </location>
</feature>
<feature type="region of interest" description="Disordered" evidence="2">
    <location>
        <begin position="1"/>
        <end position="20"/>
    </location>
</feature>
<feature type="compositionally biased region" description="Basic residues" evidence="2">
    <location>
        <begin position="1"/>
        <end position="13"/>
    </location>
</feature>
<name>RL16_BURP1</name>
<reference key="1">
    <citation type="journal article" date="2010" name="Genome Biol. Evol.">
        <title>Continuing evolution of Burkholderia mallei through genome reduction and large-scale rearrangements.</title>
        <authorList>
            <person name="Losada L."/>
            <person name="Ronning C.M."/>
            <person name="DeShazer D."/>
            <person name="Woods D."/>
            <person name="Fedorova N."/>
            <person name="Kim H.S."/>
            <person name="Shabalina S.A."/>
            <person name="Pearson T.R."/>
            <person name="Brinkac L."/>
            <person name="Tan P."/>
            <person name="Nandi T."/>
            <person name="Crabtree J."/>
            <person name="Badger J."/>
            <person name="Beckstrom-Sternberg S."/>
            <person name="Saqib M."/>
            <person name="Schutzer S.E."/>
            <person name="Keim P."/>
            <person name="Nierman W.C."/>
        </authorList>
    </citation>
    <scope>NUCLEOTIDE SEQUENCE [LARGE SCALE GENOMIC DNA]</scope>
    <source>
        <strain>1710b</strain>
    </source>
</reference>